<keyword id="KW-0687">Ribonucleoprotein</keyword>
<keyword id="KW-0689">Ribosomal protein</keyword>
<keyword id="KW-0694">RNA-binding</keyword>
<keyword id="KW-0699">rRNA-binding</keyword>
<comment type="function">
    <text evidence="1">One of the primary rRNA binding proteins, it binds directly to 16S rRNA where it nucleates assembly of the body of the 30S subunit.</text>
</comment>
<comment type="function">
    <text evidence="1">With S5 and S12 plays an important role in translational accuracy.</text>
</comment>
<comment type="subunit">
    <text evidence="1">Part of the 30S ribosomal subunit. Contacts protein S5. The interaction surface between S4 and S5 is involved in control of translational fidelity.</text>
</comment>
<comment type="similarity">
    <text evidence="1">Belongs to the universal ribosomal protein uS4 family.</text>
</comment>
<accession>Q0SQH2</accession>
<sequence length="206" mass="23533">MARYTGATCKLCRREGMKLFLKGDRCYTDKCAFVRRSYAPGQHGASRKKLSNYGTQLREKQKAKRIYGVLEGQFRNTYERAEKMRGIAGENLLKLLEMRLDNVVYRLGYGASRTEARQLVNHGHFLVNGKKVDIASFKVSVNDVITVCEKSRGSERFKMFAENPKALPKWLEANVENFEGKVIAEPAREDIDVPVNETLIVELYSK</sequence>
<dbReference type="EMBL" id="CP000312">
    <property type="protein sequence ID" value="ABG85720.1"/>
    <property type="molecule type" value="Genomic_DNA"/>
</dbReference>
<dbReference type="RefSeq" id="WP_011593130.1">
    <property type="nucleotide sequence ID" value="NC_008262.1"/>
</dbReference>
<dbReference type="SMR" id="Q0SQH2"/>
<dbReference type="KEGG" id="cpr:CPR_2371"/>
<dbReference type="Proteomes" id="UP000001824">
    <property type="component" value="Chromosome"/>
</dbReference>
<dbReference type="GO" id="GO:0015935">
    <property type="term" value="C:small ribosomal subunit"/>
    <property type="evidence" value="ECO:0007669"/>
    <property type="project" value="InterPro"/>
</dbReference>
<dbReference type="GO" id="GO:0019843">
    <property type="term" value="F:rRNA binding"/>
    <property type="evidence" value="ECO:0007669"/>
    <property type="project" value="UniProtKB-UniRule"/>
</dbReference>
<dbReference type="GO" id="GO:0003735">
    <property type="term" value="F:structural constituent of ribosome"/>
    <property type="evidence" value="ECO:0007669"/>
    <property type="project" value="InterPro"/>
</dbReference>
<dbReference type="GO" id="GO:0042274">
    <property type="term" value="P:ribosomal small subunit biogenesis"/>
    <property type="evidence" value="ECO:0007669"/>
    <property type="project" value="TreeGrafter"/>
</dbReference>
<dbReference type="GO" id="GO:0006412">
    <property type="term" value="P:translation"/>
    <property type="evidence" value="ECO:0007669"/>
    <property type="project" value="UniProtKB-UniRule"/>
</dbReference>
<dbReference type="CDD" id="cd00165">
    <property type="entry name" value="S4"/>
    <property type="match status" value="1"/>
</dbReference>
<dbReference type="FunFam" id="1.10.1050.10:FF:000001">
    <property type="entry name" value="30S ribosomal protein S4"/>
    <property type="match status" value="1"/>
</dbReference>
<dbReference type="FunFam" id="3.10.290.10:FF:000001">
    <property type="entry name" value="30S ribosomal protein S4"/>
    <property type="match status" value="1"/>
</dbReference>
<dbReference type="Gene3D" id="1.10.1050.10">
    <property type="entry name" value="Ribosomal Protein S4 Delta 41, Chain A, domain 1"/>
    <property type="match status" value="1"/>
</dbReference>
<dbReference type="Gene3D" id="3.10.290.10">
    <property type="entry name" value="RNA-binding S4 domain"/>
    <property type="match status" value="1"/>
</dbReference>
<dbReference type="HAMAP" id="MF_01306_B">
    <property type="entry name" value="Ribosomal_uS4_B"/>
    <property type="match status" value="1"/>
</dbReference>
<dbReference type="InterPro" id="IPR022801">
    <property type="entry name" value="Ribosomal_uS4"/>
</dbReference>
<dbReference type="InterPro" id="IPR005709">
    <property type="entry name" value="Ribosomal_uS4_bac-type"/>
</dbReference>
<dbReference type="InterPro" id="IPR018079">
    <property type="entry name" value="Ribosomal_uS4_CS"/>
</dbReference>
<dbReference type="InterPro" id="IPR001912">
    <property type="entry name" value="Ribosomal_uS4_N"/>
</dbReference>
<dbReference type="InterPro" id="IPR002942">
    <property type="entry name" value="S4_RNA-bd"/>
</dbReference>
<dbReference type="InterPro" id="IPR036986">
    <property type="entry name" value="S4_RNA-bd_sf"/>
</dbReference>
<dbReference type="NCBIfam" id="NF003717">
    <property type="entry name" value="PRK05327.1"/>
    <property type="match status" value="1"/>
</dbReference>
<dbReference type="NCBIfam" id="TIGR01017">
    <property type="entry name" value="rpsD_bact"/>
    <property type="match status" value="1"/>
</dbReference>
<dbReference type="PANTHER" id="PTHR11831">
    <property type="entry name" value="30S 40S RIBOSOMAL PROTEIN"/>
    <property type="match status" value="1"/>
</dbReference>
<dbReference type="PANTHER" id="PTHR11831:SF4">
    <property type="entry name" value="SMALL RIBOSOMAL SUBUNIT PROTEIN US4M"/>
    <property type="match status" value="1"/>
</dbReference>
<dbReference type="Pfam" id="PF00163">
    <property type="entry name" value="Ribosomal_S4"/>
    <property type="match status" value="1"/>
</dbReference>
<dbReference type="Pfam" id="PF01479">
    <property type="entry name" value="S4"/>
    <property type="match status" value="1"/>
</dbReference>
<dbReference type="SMART" id="SM01390">
    <property type="entry name" value="Ribosomal_S4"/>
    <property type="match status" value="1"/>
</dbReference>
<dbReference type="SMART" id="SM00363">
    <property type="entry name" value="S4"/>
    <property type="match status" value="1"/>
</dbReference>
<dbReference type="SUPFAM" id="SSF55174">
    <property type="entry name" value="Alpha-L RNA-binding motif"/>
    <property type="match status" value="1"/>
</dbReference>
<dbReference type="PROSITE" id="PS00632">
    <property type="entry name" value="RIBOSOMAL_S4"/>
    <property type="match status" value="1"/>
</dbReference>
<dbReference type="PROSITE" id="PS50889">
    <property type="entry name" value="S4"/>
    <property type="match status" value="1"/>
</dbReference>
<protein>
    <recommendedName>
        <fullName evidence="1">Small ribosomal subunit protein uS4A</fullName>
    </recommendedName>
    <alternativeName>
        <fullName evidence="2">30S ribosomal protein S4 1</fullName>
    </alternativeName>
</protein>
<feature type="chain" id="PRO_0000293266" description="Small ribosomal subunit protein uS4A">
    <location>
        <begin position="1"/>
        <end position="206"/>
    </location>
</feature>
<feature type="domain" description="S4 RNA-binding" evidence="1">
    <location>
        <begin position="98"/>
        <end position="163"/>
    </location>
</feature>
<name>RS4A_CLOPS</name>
<evidence type="ECO:0000255" key="1">
    <source>
        <dbReference type="HAMAP-Rule" id="MF_01306"/>
    </source>
</evidence>
<evidence type="ECO:0000305" key="2"/>
<reference key="1">
    <citation type="journal article" date="2006" name="Genome Res.">
        <title>Skewed genomic variability in strains of the toxigenic bacterial pathogen, Clostridium perfringens.</title>
        <authorList>
            <person name="Myers G.S.A."/>
            <person name="Rasko D.A."/>
            <person name="Cheung J.K."/>
            <person name="Ravel J."/>
            <person name="Seshadri R."/>
            <person name="DeBoy R.T."/>
            <person name="Ren Q."/>
            <person name="Varga J."/>
            <person name="Awad M.M."/>
            <person name="Brinkac L.M."/>
            <person name="Daugherty S.C."/>
            <person name="Haft D.H."/>
            <person name="Dodson R.J."/>
            <person name="Madupu R."/>
            <person name="Nelson W.C."/>
            <person name="Rosovitz M.J."/>
            <person name="Sullivan S.A."/>
            <person name="Khouri H."/>
            <person name="Dimitrov G.I."/>
            <person name="Watkins K.L."/>
            <person name="Mulligan S."/>
            <person name="Benton J."/>
            <person name="Radune D."/>
            <person name="Fisher D.J."/>
            <person name="Atkins H.S."/>
            <person name="Hiscox T."/>
            <person name="Jost B.H."/>
            <person name="Billington S.J."/>
            <person name="Songer J.G."/>
            <person name="McClane B.A."/>
            <person name="Titball R.W."/>
            <person name="Rood J.I."/>
            <person name="Melville S.B."/>
            <person name="Paulsen I.T."/>
        </authorList>
    </citation>
    <scope>NUCLEOTIDE SEQUENCE [LARGE SCALE GENOMIC DNA]</scope>
    <source>
        <strain>SM101 / Type A</strain>
    </source>
</reference>
<proteinExistence type="inferred from homology"/>
<gene>
    <name evidence="1" type="primary">rpsD1</name>
    <name type="ordered locus">CPR_2371</name>
</gene>
<organism>
    <name type="scientific">Clostridium perfringens (strain SM101 / Type A)</name>
    <dbReference type="NCBI Taxonomy" id="289380"/>
    <lineage>
        <taxon>Bacteria</taxon>
        <taxon>Bacillati</taxon>
        <taxon>Bacillota</taxon>
        <taxon>Clostridia</taxon>
        <taxon>Eubacteriales</taxon>
        <taxon>Clostridiaceae</taxon>
        <taxon>Clostridium</taxon>
    </lineage>
</organism>